<proteinExistence type="inferred from homology"/>
<reference key="1">
    <citation type="journal article" date="1994" name="J. Bacteriol.">
        <title>Rhizobium meliloti contains a novel second homolog of the cell division gene ftsZ.</title>
        <authorList>
            <person name="Margolin W."/>
            <person name="Long S.R."/>
        </authorList>
    </citation>
    <scope>NUCLEOTIDE SEQUENCE [GENOMIC DNA]</scope>
    <source>
        <strain>1021</strain>
    </source>
</reference>
<reference key="2">
    <citation type="journal article" date="2001" name="Proc. Natl. Acad. Sci. U.S.A.">
        <title>Analysis of the chromosome sequence of the legume symbiont Sinorhizobium meliloti strain 1021.</title>
        <authorList>
            <person name="Capela D."/>
            <person name="Barloy-Hubler F."/>
            <person name="Gouzy J."/>
            <person name="Bothe G."/>
            <person name="Ampe F."/>
            <person name="Batut J."/>
            <person name="Boistard P."/>
            <person name="Becker A."/>
            <person name="Boutry M."/>
            <person name="Cadieu E."/>
            <person name="Dreano S."/>
            <person name="Gloux S."/>
            <person name="Godrie T."/>
            <person name="Goffeau A."/>
            <person name="Kahn D."/>
            <person name="Kiss E."/>
            <person name="Lelaure V."/>
            <person name="Masuy D."/>
            <person name="Pohl T."/>
            <person name="Portetelle D."/>
            <person name="Puehler A."/>
            <person name="Purnelle B."/>
            <person name="Ramsperger U."/>
            <person name="Renard C."/>
            <person name="Thebault P."/>
            <person name="Vandenbol M."/>
            <person name="Weidner S."/>
            <person name="Galibert F."/>
        </authorList>
    </citation>
    <scope>NUCLEOTIDE SEQUENCE [LARGE SCALE GENOMIC DNA]</scope>
    <source>
        <strain>1021</strain>
    </source>
</reference>
<reference key="3">
    <citation type="journal article" date="2001" name="Science">
        <title>The composite genome of the legume symbiont Sinorhizobium meliloti.</title>
        <authorList>
            <person name="Galibert F."/>
            <person name="Finan T.M."/>
            <person name="Long S.R."/>
            <person name="Puehler A."/>
            <person name="Abola P."/>
            <person name="Ampe F."/>
            <person name="Barloy-Hubler F."/>
            <person name="Barnett M.J."/>
            <person name="Becker A."/>
            <person name="Boistard P."/>
            <person name="Bothe G."/>
            <person name="Boutry M."/>
            <person name="Bowser L."/>
            <person name="Buhrmester J."/>
            <person name="Cadieu E."/>
            <person name="Capela D."/>
            <person name="Chain P."/>
            <person name="Cowie A."/>
            <person name="Davis R.W."/>
            <person name="Dreano S."/>
            <person name="Federspiel N.A."/>
            <person name="Fisher R.F."/>
            <person name="Gloux S."/>
            <person name="Godrie T."/>
            <person name="Goffeau A."/>
            <person name="Golding B."/>
            <person name="Gouzy J."/>
            <person name="Gurjal M."/>
            <person name="Hernandez-Lucas I."/>
            <person name="Hong A."/>
            <person name="Huizar L."/>
            <person name="Hyman R.W."/>
            <person name="Jones T."/>
            <person name="Kahn D."/>
            <person name="Kahn M.L."/>
            <person name="Kalman S."/>
            <person name="Keating D.H."/>
            <person name="Kiss E."/>
            <person name="Komp C."/>
            <person name="Lelaure V."/>
            <person name="Masuy D."/>
            <person name="Palm C."/>
            <person name="Peck M.C."/>
            <person name="Pohl T.M."/>
            <person name="Portetelle D."/>
            <person name="Purnelle B."/>
            <person name="Ramsperger U."/>
            <person name="Surzycki R."/>
            <person name="Thebault P."/>
            <person name="Vandenbol M."/>
            <person name="Vorhoelter F.J."/>
            <person name="Weidner S."/>
            <person name="Wells D.H."/>
            <person name="Wong K."/>
            <person name="Yeh K.-C."/>
            <person name="Batut J."/>
        </authorList>
    </citation>
    <scope>NUCLEOTIDE SEQUENCE [LARGE SCALE GENOMIC DNA]</scope>
    <source>
        <strain>1021</strain>
    </source>
</reference>
<gene>
    <name evidence="1" type="primary">ftsZ2</name>
    <name type="ordered locus">R02051</name>
    <name type="ORF">SMc04296</name>
</gene>
<comment type="function">
    <text evidence="1">Essential cell division protein that forms a contractile ring structure (Z ring) at the future cell division site. The regulation of the ring assembly controls the timing and the location of cell division. One of the functions of the FtsZ ring is to recruit other cell division proteins to the septum to produce a new cell wall between the dividing cells. Binds GTP and shows GTPase activity.</text>
</comment>
<comment type="subunit">
    <text evidence="1">Homodimer. Polymerizes to form a dynamic ring structure in a strictly GTP-dependent manner. Interacts directly with several other division proteins.</text>
</comment>
<comment type="subcellular location">
    <subcellularLocation>
        <location evidence="1">Cytoplasm</location>
    </subcellularLocation>
    <text evidence="1">Assembles at midcell at the inner surface of the cytoplasmic membrane.</text>
</comment>
<comment type="similarity">
    <text evidence="1">Belongs to the FtsZ family.</text>
</comment>
<protein>
    <recommendedName>
        <fullName evidence="1">Cell division protein FtsZ 2</fullName>
    </recommendedName>
</protein>
<sequence length="346" mass="36120">MTEYKKPIITEMRPKITVIGVGGGGGNAINNMIAENLQGVDFIAANTDAQALATSKAERRIQLGAAITEGLGAGSVPDIGNAAAQESIDEIMDHLGGTHMCFVTAGMGGGTGTGAAPVIAEAARRAGILTVAVVTKPFSFEGQRRMQTAELGVERLRESADTVIVIPNQNLFRIADAKTTFADAFMIADRVLYSGVSCITDLIVKEGLMNLDFADVKTVMKGMGRAMMGTGEATGENRAMLAAEAAIANPLLDEVSMRGAKGVLVSISGGMDMTLFEVDEAATRIREEVYDEADIVVGAIFDRSLDGTFRVSVVATGLDSNRSAQPTAPEAMNGQTAAAVPSRTLQ</sequence>
<feature type="chain" id="PRO_0000114374" description="Cell division protein FtsZ 2">
    <location>
        <begin position="1"/>
        <end position="346"/>
    </location>
</feature>
<feature type="region of interest" description="Disordered" evidence="2">
    <location>
        <begin position="320"/>
        <end position="346"/>
    </location>
</feature>
<feature type="binding site" evidence="1">
    <location>
        <begin position="23"/>
        <end position="27"/>
    </location>
    <ligand>
        <name>GTP</name>
        <dbReference type="ChEBI" id="CHEBI:37565"/>
    </ligand>
</feature>
<feature type="binding site" evidence="1">
    <location>
        <begin position="110"/>
        <end position="112"/>
    </location>
    <ligand>
        <name>GTP</name>
        <dbReference type="ChEBI" id="CHEBI:37565"/>
    </ligand>
</feature>
<feature type="binding site" evidence="1">
    <location>
        <position position="141"/>
    </location>
    <ligand>
        <name>GTP</name>
        <dbReference type="ChEBI" id="CHEBI:37565"/>
    </ligand>
</feature>
<feature type="binding site" evidence="1">
    <location>
        <position position="145"/>
    </location>
    <ligand>
        <name>GTP</name>
        <dbReference type="ChEBI" id="CHEBI:37565"/>
    </ligand>
</feature>
<feature type="binding site" evidence="1">
    <location>
        <position position="189"/>
    </location>
    <ligand>
        <name>GTP</name>
        <dbReference type="ChEBI" id="CHEBI:37565"/>
    </ligand>
</feature>
<feature type="sequence conflict" description="In Ref. 1; AAA26281." evidence="3" ref="1">
    <location>
        <position position="314"/>
    </location>
</feature>
<organism>
    <name type="scientific">Rhizobium meliloti (strain 1021)</name>
    <name type="common">Ensifer meliloti</name>
    <name type="synonym">Sinorhizobium meliloti</name>
    <dbReference type="NCBI Taxonomy" id="266834"/>
    <lineage>
        <taxon>Bacteria</taxon>
        <taxon>Pseudomonadati</taxon>
        <taxon>Pseudomonadota</taxon>
        <taxon>Alphaproteobacteria</taxon>
        <taxon>Hyphomicrobiales</taxon>
        <taxon>Rhizobiaceae</taxon>
        <taxon>Sinorhizobium/Ensifer group</taxon>
        <taxon>Sinorhizobium</taxon>
    </lineage>
</organism>
<dbReference type="EMBL" id="L25440">
    <property type="protein sequence ID" value="AAA26281.1"/>
    <property type="molecule type" value="Genomic_DNA"/>
</dbReference>
<dbReference type="EMBL" id="AL591688">
    <property type="protein sequence ID" value="CAC46630.1"/>
    <property type="molecule type" value="Genomic_DNA"/>
</dbReference>
<dbReference type="PIR" id="S58854">
    <property type="entry name" value="S58854"/>
</dbReference>
<dbReference type="RefSeq" id="NP_386157.1">
    <property type="nucleotide sequence ID" value="NC_003047.1"/>
</dbReference>
<dbReference type="SMR" id="P45484"/>
<dbReference type="EnsemblBacteria" id="CAC46630">
    <property type="protein sequence ID" value="CAC46630"/>
    <property type="gene ID" value="SMc04296"/>
</dbReference>
<dbReference type="KEGG" id="sme:SMc04296"/>
<dbReference type="PATRIC" id="fig|266834.11.peg.3505"/>
<dbReference type="eggNOG" id="COG0206">
    <property type="taxonomic scope" value="Bacteria"/>
</dbReference>
<dbReference type="HOGENOM" id="CLU_024865_0_2_5"/>
<dbReference type="OrthoDB" id="9813375at2"/>
<dbReference type="Proteomes" id="UP000001976">
    <property type="component" value="Chromosome"/>
</dbReference>
<dbReference type="GO" id="GO:0032153">
    <property type="term" value="C:cell division site"/>
    <property type="evidence" value="ECO:0007669"/>
    <property type="project" value="UniProtKB-UniRule"/>
</dbReference>
<dbReference type="GO" id="GO:0005737">
    <property type="term" value="C:cytoplasm"/>
    <property type="evidence" value="ECO:0007669"/>
    <property type="project" value="UniProtKB-SubCell"/>
</dbReference>
<dbReference type="GO" id="GO:0005525">
    <property type="term" value="F:GTP binding"/>
    <property type="evidence" value="ECO:0007669"/>
    <property type="project" value="UniProtKB-UniRule"/>
</dbReference>
<dbReference type="GO" id="GO:0003924">
    <property type="term" value="F:GTPase activity"/>
    <property type="evidence" value="ECO:0007669"/>
    <property type="project" value="UniProtKB-UniRule"/>
</dbReference>
<dbReference type="GO" id="GO:0000917">
    <property type="term" value="P:division septum assembly"/>
    <property type="evidence" value="ECO:0007669"/>
    <property type="project" value="UniProtKB-KW"/>
</dbReference>
<dbReference type="GO" id="GO:0043093">
    <property type="term" value="P:FtsZ-dependent cytokinesis"/>
    <property type="evidence" value="ECO:0007669"/>
    <property type="project" value="UniProtKB-UniRule"/>
</dbReference>
<dbReference type="GO" id="GO:0051258">
    <property type="term" value="P:protein polymerization"/>
    <property type="evidence" value="ECO:0007669"/>
    <property type="project" value="UniProtKB-UniRule"/>
</dbReference>
<dbReference type="CDD" id="cd02201">
    <property type="entry name" value="FtsZ_type1"/>
    <property type="match status" value="1"/>
</dbReference>
<dbReference type="FunFam" id="3.30.1330.20:FF:000011">
    <property type="entry name" value="Cell division protein FtsZ"/>
    <property type="match status" value="1"/>
</dbReference>
<dbReference type="FunFam" id="3.40.50.1440:FF:000001">
    <property type="entry name" value="Cell division protein FtsZ"/>
    <property type="match status" value="1"/>
</dbReference>
<dbReference type="Gene3D" id="3.30.1330.20">
    <property type="entry name" value="Tubulin/FtsZ, C-terminal domain"/>
    <property type="match status" value="1"/>
</dbReference>
<dbReference type="Gene3D" id="3.40.50.1440">
    <property type="entry name" value="Tubulin/FtsZ, GTPase domain"/>
    <property type="match status" value="1"/>
</dbReference>
<dbReference type="HAMAP" id="MF_00909">
    <property type="entry name" value="FtsZ"/>
    <property type="match status" value="1"/>
</dbReference>
<dbReference type="InterPro" id="IPR000158">
    <property type="entry name" value="Cell_div_FtsZ"/>
</dbReference>
<dbReference type="InterPro" id="IPR020805">
    <property type="entry name" value="Cell_div_FtsZ_CS"/>
</dbReference>
<dbReference type="InterPro" id="IPR045061">
    <property type="entry name" value="FtsZ/CetZ"/>
</dbReference>
<dbReference type="InterPro" id="IPR024757">
    <property type="entry name" value="FtsZ_C"/>
</dbReference>
<dbReference type="InterPro" id="IPR008280">
    <property type="entry name" value="Tub_FtsZ_C"/>
</dbReference>
<dbReference type="InterPro" id="IPR037103">
    <property type="entry name" value="Tubulin/FtsZ-like_C"/>
</dbReference>
<dbReference type="InterPro" id="IPR018316">
    <property type="entry name" value="Tubulin/FtsZ_2-layer-sand-dom"/>
</dbReference>
<dbReference type="InterPro" id="IPR036525">
    <property type="entry name" value="Tubulin/FtsZ_GTPase_sf"/>
</dbReference>
<dbReference type="InterPro" id="IPR003008">
    <property type="entry name" value="Tubulin_FtsZ_GTPase"/>
</dbReference>
<dbReference type="NCBIfam" id="TIGR00065">
    <property type="entry name" value="ftsZ"/>
    <property type="match status" value="1"/>
</dbReference>
<dbReference type="PANTHER" id="PTHR30314">
    <property type="entry name" value="CELL DIVISION PROTEIN FTSZ-RELATED"/>
    <property type="match status" value="1"/>
</dbReference>
<dbReference type="PANTHER" id="PTHR30314:SF3">
    <property type="entry name" value="MITOCHONDRIAL DIVISION PROTEIN FSZA"/>
    <property type="match status" value="1"/>
</dbReference>
<dbReference type="Pfam" id="PF12327">
    <property type="entry name" value="FtsZ_C"/>
    <property type="match status" value="1"/>
</dbReference>
<dbReference type="Pfam" id="PF00091">
    <property type="entry name" value="Tubulin"/>
    <property type="match status" value="1"/>
</dbReference>
<dbReference type="PRINTS" id="PR00423">
    <property type="entry name" value="CELLDVISFTSZ"/>
</dbReference>
<dbReference type="SMART" id="SM00864">
    <property type="entry name" value="Tubulin"/>
    <property type="match status" value="1"/>
</dbReference>
<dbReference type="SMART" id="SM00865">
    <property type="entry name" value="Tubulin_C"/>
    <property type="match status" value="1"/>
</dbReference>
<dbReference type="SUPFAM" id="SSF55307">
    <property type="entry name" value="Tubulin C-terminal domain-like"/>
    <property type="match status" value="1"/>
</dbReference>
<dbReference type="SUPFAM" id="SSF52490">
    <property type="entry name" value="Tubulin nucleotide-binding domain-like"/>
    <property type="match status" value="1"/>
</dbReference>
<dbReference type="PROSITE" id="PS01134">
    <property type="entry name" value="FTSZ_1"/>
    <property type="match status" value="1"/>
</dbReference>
<dbReference type="PROSITE" id="PS01135">
    <property type="entry name" value="FTSZ_2"/>
    <property type="match status" value="1"/>
</dbReference>
<name>FTSZ2_RHIME</name>
<evidence type="ECO:0000255" key="1">
    <source>
        <dbReference type="HAMAP-Rule" id="MF_00909"/>
    </source>
</evidence>
<evidence type="ECO:0000256" key="2">
    <source>
        <dbReference type="SAM" id="MobiDB-lite"/>
    </source>
</evidence>
<evidence type="ECO:0000305" key="3"/>
<accession>P45484</accession>
<keyword id="KW-0131">Cell cycle</keyword>
<keyword id="KW-0132">Cell division</keyword>
<keyword id="KW-0963">Cytoplasm</keyword>
<keyword id="KW-0342">GTP-binding</keyword>
<keyword id="KW-0547">Nucleotide-binding</keyword>
<keyword id="KW-1185">Reference proteome</keyword>
<keyword id="KW-0717">Septation</keyword>